<comment type="function">
    <text evidence="1">Could be a nuclease involved in processing of the 5'-end of pre-16S rRNA.</text>
</comment>
<comment type="subcellular location">
    <subcellularLocation>
        <location evidence="1">Cytoplasm</location>
    </subcellularLocation>
</comment>
<comment type="similarity">
    <text evidence="1">Belongs to the YqgF nuclease family.</text>
</comment>
<dbReference type="EC" id="3.1.-.-" evidence="1"/>
<dbReference type="EMBL" id="CP001131">
    <property type="protein sequence ID" value="ACG73858.1"/>
    <property type="molecule type" value="Genomic_DNA"/>
</dbReference>
<dbReference type="RefSeq" id="WP_012526639.1">
    <property type="nucleotide sequence ID" value="NC_011145.1"/>
</dbReference>
<dbReference type="SMR" id="B4UH04"/>
<dbReference type="KEGG" id="ank:AnaeK_2633"/>
<dbReference type="HOGENOM" id="CLU_098240_2_0_7"/>
<dbReference type="OrthoDB" id="9796140at2"/>
<dbReference type="Proteomes" id="UP000001871">
    <property type="component" value="Chromosome"/>
</dbReference>
<dbReference type="GO" id="GO:0005829">
    <property type="term" value="C:cytosol"/>
    <property type="evidence" value="ECO:0007669"/>
    <property type="project" value="TreeGrafter"/>
</dbReference>
<dbReference type="GO" id="GO:0004518">
    <property type="term" value="F:nuclease activity"/>
    <property type="evidence" value="ECO:0007669"/>
    <property type="project" value="UniProtKB-KW"/>
</dbReference>
<dbReference type="GO" id="GO:0000967">
    <property type="term" value="P:rRNA 5'-end processing"/>
    <property type="evidence" value="ECO:0007669"/>
    <property type="project" value="UniProtKB-UniRule"/>
</dbReference>
<dbReference type="CDD" id="cd16964">
    <property type="entry name" value="YqgF"/>
    <property type="match status" value="1"/>
</dbReference>
<dbReference type="Gene3D" id="3.30.420.140">
    <property type="entry name" value="YqgF/RNase H-like domain"/>
    <property type="match status" value="1"/>
</dbReference>
<dbReference type="HAMAP" id="MF_00651">
    <property type="entry name" value="Nuclease_YqgF"/>
    <property type="match status" value="1"/>
</dbReference>
<dbReference type="InterPro" id="IPR012337">
    <property type="entry name" value="RNaseH-like_sf"/>
</dbReference>
<dbReference type="InterPro" id="IPR005227">
    <property type="entry name" value="YqgF"/>
</dbReference>
<dbReference type="InterPro" id="IPR006641">
    <property type="entry name" value="YqgF/RNaseH-like_dom"/>
</dbReference>
<dbReference type="InterPro" id="IPR037027">
    <property type="entry name" value="YqgF/RNaseH-like_dom_sf"/>
</dbReference>
<dbReference type="NCBIfam" id="TIGR00250">
    <property type="entry name" value="RNAse_H_YqgF"/>
    <property type="match status" value="1"/>
</dbReference>
<dbReference type="PANTHER" id="PTHR33317">
    <property type="entry name" value="POLYNUCLEOTIDYL TRANSFERASE, RIBONUCLEASE H-LIKE SUPERFAMILY PROTEIN"/>
    <property type="match status" value="1"/>
</dbReference>
<dbReference type="PANTHER" id="PTHR33317:SF4">
    <property type="entry name" value="POLYNUCLEOTIDYL TRANSFERASE, RIBONUCLEASE H-LIKE SUPERFAMILY PROTEIN"/>
    <property type="match status" value="1"/>
</dbReference>
<dbReference type="Pfam" id="PF03652">
    <property type="entry name" value="RuvX"/>
    <property type="match status" value="1"/>
</dbReference>
<dbReference type="SMART" id="SM00732">
    <property type="entry name" value="YqgFc"/>
    <property type="match status" value="1"/>
</dbReference>
<dbReference type="SUPFAM" id="SSF53098">
    <property type="entry name" value="Ribonuclease H-like"/>
    <property type="match status" value="1"/>
</dbReference>
<sequence length="137" mass="14851">MRTLGVDLGRVRIGLAVADEILRTARAVTTVVRRTEAEDLSAIAEVARDYEVTRAVVGLPLNMDGTEGPSARLARGFAPRLEAALGVPVELFDERLSSFEAESRLRARGLSAREQRGQVDAEAAAVILQGWLDRRAP</sequence>
<reference key="1">
    <citation type="submission" date="2008-08" db="EMBL/GenBank/DDBJ databases">
        <title>Complete sequence of Anaeromyxobacter sp. K.</title>
        <authorList>
            <consortium name="US DOE Joint Genome Institute"/>
            <person name="Lucas S."/>
            <person name="Copeland A."/>
            <person name="Lapidus A."/>
            <person name="Glavina del Rio T."/>
            <person name="Dalin E."/>
            <person name="Tice H."/>
            <person name="Bruce D."/>
            <person name="Goodwin L."/>
            <person name="Pitluck S."/>
            <person name="Saunders E."/>
            <person name="Brettin T."/>
            <person name="Detter J.C."/>
            <person name="Han C."/>
            <person name="Larimer F."/>
            <person name="Land M."/>
            <person name="Hauser L."/>
            <person name="Kyrpides N."/>
            <person name="Ovchinnikiva G."/>
            <person name="Beliaev A."/>
        </authorList>
    </citation>
    <scope>NUCLEOTIDE SEQUENCE [LARGE SCALE GENOMIC DNA]</scope>
    <source>
        <strain>K</strain>
    </source>
</reference>
<evidence type="ECO:0000255" key="1">
    <source>
        <dbReference type="HAMAP-Rule" id="MF_00651"/>
    </source>
</evidence>
<keyword id="KW-0963">Cytoplasm</keyword>
<keyword id="KW-0378">Hydrolase</keyword>
<keyword id="KW-0540">Nuclease</keyword>
<keyword id="KW-0690">Ribosome biogenesis</keyword>
<organism>
    <name type="scientific">Anaeromyxobacter sp. (strain K)</name>
    <dbReference type="NCBI Taxonomy" id="447217"/>
    <lineage>
        <taxon>Bacteria</taxon>
        <taxon>Pseudomonadati</taxon>
        <taxon>Myxococcota</taxon>
        <taxon>Myxococcia</taxon>
        <taxon>Myxococcales</taxon>
        <taxon>Cystobacterineae</taxon>
        <taxon>Anaeromyxobacteraceae</taxon>
        <taxon>Anaeromyxobacter</taxon>
    </lineage>
</organism>
<accession>B4UH04</accession>
<name>YQGF_ANASK</name>
<gene>
    <name type="ordered locus">AnaeK_2633</name>
</gene>
<proteinExistence type="inferred from homology"/>
<feature type="chain" id="PRO_1000130993" description="Putative pre-16S rRNA nuclease">
    <location>
        <begin position="1"/>
        <end position="137"/>
    </location>
</feature>
<protein>
    <recommendedName>
        <fullName evidence="1">Putative pre-16S rRNA nuclease</fullName>
        <ecNumber evidence="1">3.1.-.-</ecNumber>
    </recommendedName>
</protein>